<name>Y1587_THEP1</name>
<keyword id="KW-0378">Hydrolase</keyword>
<feature type="chain" id="PRO_1000013515" description="UPF0173 metal-dependent hydrolase Tpet_1587">
    <location>
        <begin position="1"/>
        <end position="226"/>
    </location>
</feature>
<sequence length="226" mass="24778">MKVTFLGHAVVLIEGKKNIIIDPFISGNPVCPVKLEDLPKIDYILVTHGHGDHLGDAVEIAKKNDATVISNYEICHYLGKKGVKTHAMHIGGSYLFDFGRVKMTPAVHGSGILDGDSMIYGGNPAGFLITLERKKIYHAGDTGLTREMELLGEENVDVAFLPIGGNFVMDVEDAVRATAMIKPKKVVPMHYGTWELIFADVELFKKKVTEMSVECVILEPGESLEL</sequence>
<comment type="similarity">
    <text evidence="1">Belongs to the UPF0173 family.</text>
</comment>
<proteinExistence type="inferred from homology"/>
<accession>A5IN20</accession>
<evidence type="ECO:0000255" key="1">
    <source>
        <dbReference type="HAMAP-Rule" id="MF_00457"/>
    </source>
</evidence>
<gene>
    <name type="ordered locus">Tpet_1587</name>
</gene>
<reference key="1">
    <citation type="submission" date="2007-05" db="EMBL/GenBank/DDBJ databases">
        <title>Complete sequence of Thermotoga petrophila RKU-1.</title>
        <authorList>
            <consortium name="US DOE Joint Genome Institute"/>
            <person name="Copeland A."/>
            <person name="Lucas S."/>
            <person name="Lapidus A."/>
            <person name="Barry K."/>
            <person name="Glavina del Rio T."/>
            <person name="Dalin E."/>
            <person name="Tice H."/>
            <person name="Pitluck S."/>
            <person name="Sims D."/>
            <person name="Brettin T."/>
            <person name="Bruce D."/>
            <person name="Detter J.C."/>
            <person name="Han C."/>
            <person name="Tapia R."/>
            <person name="Schmutz J."/>
            <person name="Larimer F."/>
            <person name="Land M."/>
            <person name="Hauser L."/>
            <person name="Kyrpides N."/>
            <person name="Mikhailova N."/>
            <person name="Nelson K."/>
            <person name="Gogarten J.P."/>
            <person name="Noll K."/>
            <person name="Richardson P."/>
        </authorList>
    </citation>
    <scope>NUCLEOTIDE SEQUENCE [LARGE SCALE GENOMIC DNA]</scope>
    <source>
        <strain>ATCC BAA-488 / DSM 13995 / JCM 10881 / RKU-1</strain>
    </source>
</reference>
<organism>
    <name type="scientific">Thermotoga petrophila (strain ATCC BAA-488 / DSM 13995 / JCM 10881 / RKU-1)</name>
    <dbReference type="NCBI Taxonomy" id="390874"/>
    <lineage>
        <taxon>Bacteria</taxon>
        <taxon>Thermotogati</taxon>
        <taxon>Thermotogota</taxon>
        <taxon>Thermotogae</taxon>
        <taxon>Thermotogales</taxon>
        <taxon>Thermotogaceae</taxon>
        <taxon>Thermotoga</taxon>
    </lineage>
</organism>
<dbReference type="EMBL" id="CP000702">
    <property type="protein sequence ID" value="ABQ47593.1"/>
    <property type="molecule type" value="Genomic_DNA"/>
</dbReference>
<dbReference type="RefSeq" id="WP_011944003.1">
    <property type="nucleotide sequence ID" value="NC_009486.1"/>
</dbReference>
<dbReference type="SMR" id="A5IN20"/>
<dbReference type="STRING" id="390874.Tpet_1587"/>
<dbReference type="KEGG" id="tpt:Tpet_1587"/>
<dbReference type="eggNOG" id="COG2220">
    <property type="taxonomic scope" value="Bacteria"/>
</dbReference>
<dbReference type="HOGENOM" id="CLU_070010_4_1_0"/>
<dbReference type="Proteomes" id="UP000006558">
    <property type="component" value="Chromosome"/>
</dbReference>
<dbReference type="GO" id="GO:0016787">
    <property type="term" value="F:hydrolase activity"/>
    <property type="evidence" value="ECO:0007669"/>
    <property type="project" value="UniProtKB-UniRule"/>
</dbReference>
<dbReference type="Gene3D" id="3.60.15.10">
    <property type="entry name" value="Ribonuclease Z/Hydroxyacylglutathione hydrolase-like"/>
    <property type="match status" value="1"/>
</dbReference>
<dbReference type="HAMAP" id="MF_00457">
    <property type="entry name" value="UPF0173"/>
    <property type="match status" value="1"/>
</dbReference>
<dbReference type="InterPro" id="IPR001279">
    <property type="entry name" value="Metallo-B-lactamas"/>
</dbReference>
<dbReference type="InterPro" id="IPR036866">
    <property type="entry name" value="RibonucZ/Hydroxyglut_hydro"/>
</dbReference>
<dbReference type="InterPro" id="IPR022877">
    <property type="entry name" value="UPF0173"/>
</dbReference>
<dbReference type="InterPro" id="IPR050114">
    <property type="entry name" value="UPF0173_UPF0282_UlaG_hydrolase"/>
</dbReference>
<dbReference type="NCBIfam" id="NF001911">
    <property type="entry name" value="PRK00685.1"/>
    <property type="match status" value="1"/>
</dbReference>
<dbReference type="PANTHER" id="PTHR43546:SF3">
    <property type="entry name" value="UPF0173 METAL-DEPENDENT HYDROLASE MJ1163"/>
    <property type="match status" value="1"/>
</dbReference>
<dbReference type="PANTHER" id="PTHR43546">
    <property type="entry name" value="UPF0173 METAL-DEPENDENT HYDROLASE MJ1163-RELATED"/>
    <property type="match status" value="1"/>
</dbReference>
<dbReference type="Pfam" id="PF12706">
    <property type="entry name" value="Lactamase_B_2"/>
    <property type="match status" value="1"/>
</dbReference>
<dbReference type="SMART" id="SM00849">
    <property type="entry name" value="Lactamase_B"/>
    <property type="match status" value="1"/>
</dbReference>
<dbReference type="SUPFAM" id="SSF56281">
    <property type="entry name" value="Metallo-hydrolase/oxidoreductase"/>
    <property type="match status" value="1"/>
</dbReference>
<protein>
    <recommendedName>
        <fullName evidence="1">UPF0173 metal-dependent hydrolase Tpet_1587</fullName>
    </recommendedName>
</protein>